<gene>
    <name type="primary">APEX1</name>
    <name type="synonym">APE</name>
    <name type="synonym">APEX</name>
    <name type="synonym">BAP1</name>
    <name type="synonym">REF1</name>
</gene>
<protein>
    <recommendedName>
        <fullName>DNA repair nuclease/redox regulator APEX1</fullName>
        <ecNumber evidence="3">3.1.11.2</ecNumber>
        <ecNumber evidence="3">3.1.21.-</ecNumber>
    </recommendedName>
    <alternativeName>
        <fullName>APEX nuclease</fullName>
        <shortName>APEN</shortName>
    </alternativeName>
    <alternativeName>
        <fullName>Apurinic-apyrimidinic endonuclease 1</fullName>
        <shortName>AP endonuclease 1</shortName>
    </alternativeName>
    <alternativeName>
        <fullName>Redox factor-1</fullName>
        <shortName>REF-1</shortName>
    </alternativeName>
    <component>
        <recommendedName>
            <fullName>DNA repair nuclease/redox regulator APEX1, mitochondrial</fullName>
        </recommendedName>
    </component>
</protein>
<reference key="1">
    <citation type="submission" date="2006-08" db="EMBL/GenBank/DDBJ databases">
        <title>Positive selection in transcription factor genes on the human lineage.</title>
        <authorList>
            <person name="Nickel G.C."/>
            <person name="Tefft D.L."/>
            <person name="Trevarthen K."/>
            <person name="Funt J."/>
            <person name="Adams M.D."/>
        </authorList>
    </citation>
    <scope>NUCLEOTIDE SEQUENCE [GENOMIC DNA]</scope>
</reference>
<keyword id="KW-0007">Acetylation</keyword>
<keyword id="KW-0010">Activator</keyword>
<keyword id="KW-0165">Cleavage on pair of basic residues</keyword>
<keyword id="KW-0963">Cytoplasm</keyword>
<keyword id="KW-1015">Disulfide bond</keyword>
<keyword id="KW-0227">DNA damage</keyword>
<keyword id="KW-0233">DNA recombination</keyword>
<keyword id="KW-0234">DNA repair</keyword>
<keyword id="KW-0238">DNA-binding</keyword>
<keyword id="KW-0255">Endonuclease</keyword>
<keyword id="KW-0256">Endoplasmic reticulum</keyword>
<keyword id="KW-0269">Exonuclease</keyword>
<keyword id="KW-0378">Hydrolase</keyword>
<keyword id="KW-0460">Magnesium</keyword>
<keyword id="KW-0479">Metal-binding</keyword>
<keyword id="KW-0496">Mitochondrion</keyword>
<keyword id="KW-0540">Nuclease</keyword>
<keyword id="KW-0539">Nucleus</keyword>
<keyword id="KW-0597">Phosphoprotein</keyword>
<keyword id="KW-1185">Reference proteome</keyword>
<keyword id="KW-0678">Repressor</keyword>
<keyword id="KW-0694">RNA-binding</keyword>
<keyword id="KW-0702">S-nitrosylation</keyword>
<keyword id="KW-0804">Transcription</keyword>
<keyword id="KW-0805">Transcription regulation</keyword>
<keyword id="KW-0832">Ubl conjugation</keyword>
<sequence>MPKRGKKGAVAEDGDELRTEPEAKKSKTAAKKNDKEAAGEGPALYEDPPDQKTSPSGKPATLKICSWNVDGLRAWIKKKGLDWVKEEAPDILCLQETKCSENKLPAELQELPGLSHQYWSAPSDKEGYSGVGLLSRQCPLKVSYGIGEEEHDQEGRVIVAEFDSFVLVTAYVPNAGRGLVRLEYRQRWDEAFRKFLKGLASRKPLVLCGDLNVAHEEIDLRNPKGNKKNAGFTPQERQGFGELLQAVPLADSFRHLYPNTPYAYTFWTYMMNARSKNVGWRLDYFLLSHSLLPALCDSKIRSKALGSDHCPITLYLAL</sequence>
<dbReference type="EC" id="3.1.11.2" evidence="3"/>
<dbReference type="EC" id="3.1.21.-" evidence="3"/>
<dbReference type="EMBL" id="DQ977185">
    <property type="protein sequence ID" value="ABM54218.1"/>
    <property type="molecule type" value="Genomic_DNA"/>
</dbReference>
<dbReference type="RefSeq" id="XP_003811777.1">
    <property type="nucleotide sequence ID" value="XM_003811729.5"/>
</dbReference>
<dbReference type="RefSeq" id="XP_003811778.1">
    <property type="nucleotide sequence ID" value="XM_003811730.5"/>
</dbReference>
<dbReference type="RefSeq" id="XP_008962362.1">
    <property type="nucleotide sequence ID" value="XM_008964114.3"/>
</dbReference>
<dbReference type="BMRB" id="A1YFZ3"/>
<dbReference type="SMR" id="A1YFZ3"/>
<dbReference type="STRING" id="9597.ENSPPAP00000031696"/>
<dbReference type="Ensembl" id="ENSPPAT00000054561.1">
    <property type="protein sequence ID" value="ENSPPAP00000031696.1"/>
    <property type="gene ID" value="ENSPPAG00000038760.1"/>
</dbReference>
<dbReference type="GeneID" id="100987860"/>
<dbReference type="KEGG" id="pps:100987860"/>
<dbReference type="CTD" id="328"/>
<dbReference type="eggNOG" id="KOG1294">
    <property type="taxonomic scope" value="Eukaryota"/>
</dbReference>
<dbReference type="GeneTree" id="ENSGT00530000063540"/>
<dbReference type="OMA" id="WWSYRGR"/>
<dbReference type="Proteomes" id="UP000240080">
    <property type="component" value="Chromosome 14"/>
</dbReference>
<dbReference type="Bgee" id="ENSPPAG00000038760">
    <property type="expression patterns" value="Expressed in adult mammalian kidney and 6 other cell types or tissues"/>
</dbReference>
<dbReference type="GO" id="GO:0005813">
    <property type="term" value="C:centrosome"/>
    <property type="evidence" value="ECO:0007669"/>
    <property type="project" value="Ensembl"/>
</dbReference>
<dbReference type="GO" id="GO:0005737">
    <property type="term" value="C:cytoplasm"/>
    <property type="evidence" value="ECO:0000250"/>
    <property type="project" value="UniProtKB"/>
</dbReference>
<dbReference type="GO" id="GO:0005783">
    <property type="term" value="C:endoplasmic reticulum"/>
    <property type="evidence" value="ECO:0007669"/>
    <property type="project" value="UniProtKB-SubCell"/>
</dbReference>
<dbReference type="GO" id="GO:0005739">
    <property type="term" value="C:mitochondrion"/>
    <property type="evidence" value="ECO:0000250"/>
    <property type="project" value="UniProtKB"/>
</dbReference>
<dbReference type="GO" id="GO:0016607">
    <property type="term" value="C:nuclear speck"/>
    <property type="evidence" value="ECO:0000250"/>
    <property type="project" value="UniProtKB"/>
</dbReference>
<dbReference type="GO" id="GO:0005730">
    <property type="term" value="C:nucleolus"/>
    <property type="evidence" value="ECO:0000250"/>
    <property type="project" value="UniProtKB"/>
</dbReference>
<dbReference type="GO" id="GO:0005654">
    <property type="term" value="C:nucleoplasm"/>
    <property type="evidence" value="ECO:0000250"/>
    <property type="project" value="UniProtKB"/>
</dbReference>
<dbReference type="GO" id="GO:0005634">
    <property type="term" value="C:nucleus"/>
    <property type="evidence" value="ECO:0000250"/>
    <property type="project" value="UniProtKB"/>
</dbReference>
<dbReference type="GO" id="GO:0048471">
    <property type="term" value="C:perinuclear region of cytoplasm"/>
    <property type="evidence" value="ECO:0007669"/>
    <property type="project" value="Ensembl"/>
</dbReference>
<dbReference type="GO" id="GO:0008408">
    <property type="term" value="F:3'-5' exonuclease activity"/>
    <property type="evidence" value="ECO:0000250"/>
    <property type="project" value="UniProtKB"/>
</dbReference>
<dbReference type="GO" id="GO:0031490">
    <property type="term" value="F:chromatin DNA binding"/>
    <property type="evidence" value="ECO:0000250"/>
    <property type="project" value="UniProtKB"/>
</dbReference>
<dbReference type="GO" id="GO:0052720">
    <property type="term" value="F:class II DNA-(apurinic or apyrimidinic site) endonuclease activity"/>
    <property type="evidence" value="ECO:0000250"/>
    <property type="project" value="UniProtKB"/>
</dbReference>
<dbReference type="GO" id="GO:0003684">
    <property type="term" value="F:damaged DNA binding"/>
    <property type="evidence" value="ECO:0000250"/>
    <property type="project" value="UniProtKB"/>
</dbReference>
<dbReference type="GO" id="GO:0140431">
    <property type="term" value="F:DNA-(abasic site) binding"/>
    <property type="evidence" value="ECO:0000250"/>
    <property type="project" value="UniProtKB"/>
</dbReference>
<dbReference type="GO" id="GO:0003906">
    <property type="term" value="F:DNA-(apurinic or apyrimidinic site) endonuclease activity"/>
    <property type="evidence" value="ECO:0000250"/>
    <property type="project" value="UniProtKB"/>
</dbReference>
<dbReference type="GO" id="GO:0008311">
    <property type="term" value="F:double-stranded DNA 3'-5' DNA exonuclease activity"/>
    <property type="evidence" value="ECO:0007669"/>
    <property type="project" value="TreeGrafter"/>
</dbReference>
<dbReference type="GO" id="GO:0003691">
    <property type="term" value="F:double-stranded telomeric DNA binding"/>
    <property type="evidence" value="ECO:0007669"/>
    <property type="project" value="Ensembl"/>
</dbReference>
<dbReference type="GO" id="GO:0046872">
    <property type="term" value="F:metal ion binding"/>
    <property type="evidence" value="ECO:0007669"/>
    <property type="project" value="UniProtKB-KW"/>
</dbReference>
<dbReference type="GO" id="GO:0016491">
    <property type="term" value="F:oxidoreductase activity"/>
    <property type="evidence" value="ECO:0000250"/>
    <property type="project" value="UniProtKB"/>
</dbReference>
<dbReference type="GO" id="GO:0090580">
    <property type="term" value="F:phosphodiesterase activity, acting on 3'-phosphoglycolate-terminated DNA strands"/>
    <property type="evidence" value="ECO:0007669"/>
    <property type="project" value="Ensembl"/>
</dbReference>
<dbReference type="GO" id="GO:0003723">
    <property type="term" value="F:RNA binding"/>
    <property type="evidence" value="ECO:0007669"/>
    <property type="project" value="UniProtKB-KW"/>
</dbReference>
<dbReference type="GO" id="GO:0016890">
    <property type="term" value="F:site-specific endodeoxyribonuclease activity, specific for altered base"/>
    <property type="evidence" value="ECO:0000250"/>
    <property type="project" value="UniProtKB"/>
</dbReference>
<dbReference type="GO" id="GO:0003713">
    <property type="term" value="F:transcription coactivator activity"/>
    <property type="evidence" value="ECO:0007669"/>
    <property type="project" value="Ensembl"/>
</dbReference>
<dbReference type="GO" id="GO:0045454">
    <property type="term" value="P:cell redox homeostasis"/>
    <property type="evidence" value="ECO:0007669"/>
    <property type="project" value="Ensembl"/>
</dbReference>
<dbReference type="GO" id="GO:0006308">
    <property type="term" value="P:DNA catabolic process"/>
    <property type="evidence" value="ECO:0007669"/>
    <property type="project" value="Ensembl"/>
</dbReference>
<dbReference type="GO" id="GO:0006310">
    <property type="term" value="P:DNA recombination"/>
    <property type="evidence" value="ECO:0007669"/>
    <property type="project" value="UniProtKB-KW"/>
</dbReference>
<dbReference type="GO" id="GO:0006281">
    <property type="term" value="P:DNA repair"/>
    <property type="evidence" value="ECO:0000250"/>
    <property type="project" value="UniProtKB"/>
</dbReference>
<dbReference type="GO" id="GO:0044029">
    <property type="term" value="P:positive regulation of gene expression via chromosomal CpG island demethylation"/>
    <property type="evidence" value="ECO:0000250"/>
    <property type="project" value="UniProtKB"/>
</dbReference>
<dbReference type="GO" id="GO:0045944">
    <property type="term" value="P:positive regulation of transcription by RNA polymerase II"/>
    <property type="evidence" value="ECO:0007669"/>
    <property type="project" value="Ensembl"/>
</dbReference>
<dbReference type="GO" id="GO:0042981">
    <property type="term" value="P:regulation of apoptotic process"/>
    <property type="evidence" value="ECO:0000250"/>
    <property type="project" value="UniProtKB"/>
</dbReference>
<dbReference type="GO" id="GO:0043488">
    <property type="term" value="P:regulation of mRNA stability"/>
    <property type="evidence" value="ECO:0000250"/>
    <property type="project" value="UniProtKB"/>
</dbReference>
<dbReference type="GO" id="GO:0097698">
    <property type="term" value="P:telomere maintenance via base-excision repair"/>
    <property type="evidence" value="ECO:0007669"/>
    <property type="project" value="Ensembl"/>
</dbReference>
<dbReference type="CDD" id="cd09087">
    <property type="entry name" value="Ape1-like_AP-endo"/>
    <property type="match status" value="1"/>
</dbReference>
<dbReference type="FunFam" id="3.60.10.10:FF:000009">
    <property type="entry name" value="DNA-(apurinic or apyrimidinic site) lyase"/>
    <property type="match status" value="1"/>
</dbReference>
<dbReference type="Gene3D" id="3.60.10.10">
    <property type="entry name" value="Endonuclease/exonuclease/phosphatase"/>
    <property type="match status" value="1"/>
</dbReference>
<dbReference type="InterPro" id="IPR004808">
    <property type="entry name" value="AP_endonuc_1"/>
</dbReference>
<dbReference type="InterPro" id="IPR020847">
    <property type="entry name" value="AP_endonuclease_F1_BS"/>
</dbReference>
<dbReference type="InterPro" id="IPR020848">
    <property type="entry name" value="AP_endonuclease_F1_CS"/>
</dbReference>
<dbReference type="InterPro" id="IPR036691">
    <property type="entry name" value="Endo/exonu/phosph_ase_sf"/>
</dbReference>
<dbReference type="InterPro" id="IPR005135">
    <property type="entry name" value="Endo/exonuclease/phosphatase"/>
</dbReference>
<dbReference type="NCBIfam" id="TIGR00195">
    <property type="entry name" value="exoDNase_III"/>
    <property type="match status" value="1"/>
</dbReference>
<dbReference type="NCBIfam" id="TIGR00633">
    <property type="entry name" value="xth"/>
    <property type="match status" value="1"/>
</dbReference>
<dbReference type="PANTHER" id="PTHR22748">
    <property type="entry name" value="AP ENDONUCLEASE"/>
    <property type="match status" value="1"/>
</dbReference>
<dbReference type="PANTHER" id="PTHR22748:SF6">
    <property type="entry name" value="DNA-(APURINIC OR APYRIMIDINIC SITE) ENDONUCLEASE"/>
    <property type="match status" value="1"/>
</dbReference>
<dbReference type="Pfam" id="PF03372">
    <property type="entry name" value="Exo_endo_phos"/>
    <property type="match status" value="1"/>
</dbReference>
<dbReference type="SUPFAM" id="SSF56219">
    <property type="entry name" value="DNase I-like"/>
    <property type="match status" value="1"/>
</dbReference>
<dbReference type="PROSITE" id="PS00726">
    <property type="entry name" value="AP_NUCLEASE_F1_1"/>
    <property type="match status" value="1"/>
</dbReference>
<dbReference type="PROSITE" id="PS00727">
    <property type="entry name" value="AP_NUCLEASE_F1_2"/>
    <property type="match status" value="1"/>
</dbReference>
<dbReference type="PROSITE" id="PS00728">
    <property type="entry name" value="AP_NUCLEASE_F1_3"/>
    <property type="match status" value="1"/>
</dbReference>
<dbReference type="PROSITE" id="PS51435">
    <property type="entry name" value="AP_NUCLEASE_F1_4"/>
    <property type="match status" value="1"/>
</dbReference>
<name>APEX1_PANPA</name>
<organism>
    <name type="scientific">Pan paniscus</name>
    <name type="common">Pygmy chimpanzee</name>
    <name type="synonym">Bonobo</name>
    <dbReference type="NCBI Taxonomy" id="9597"/>
    <lineage>
        <taxon>Eukaryota</taxon>
        <taxon>Metazoa</taxon>
        <taxon>Chordata</taxon>
        <taxon>Craniata</taxon>
        <taxon>Vertebrata</taxon>
        <taxon>Euteleostomi</taxon>
        <taxon>Mammalia</taxon>
        <taxon>Eutheria</taxon>
        <taxon>Euarchontoglires</taxon>
        <taxon>Primates</taxon>
        <taxon>Haplorrhini</taxon>
        <taxon>Catarrhini</taxon>
        <taxon>Hominidae</taxon>
        <taxon>Pan</taxon>
    </lineage>
</organism>
<feature type="chain" id="PRO_0000285546" description="DNA repair nuclease/redox regulator APEX1">
    <location>
        <begin position="1"/>
        <end position="318"/>
    </location>
</feature>
<feature type="chain" id="PRO_0000402808" description="DNA repair nuclease/redox regulator APEX1, mitochondrial">
    <location>
        <begin position="32"/>
        <end position="318"/>
    </location>
</feature>
<feature type="region of interest" description="Disordered" evidence="6">
    <location>
        <begin position="1"/>
        <end position="60"/>
    </location>
</feature>
<feature type="region of interest" description="Necessary for interaction with YBX1, binding to RNA, association together with NPM1 to rRNA, endoribonuclease activity on abasic RNA and localization in the nucleoli" evidence="1">
    <location>
        <begin position="1"/>
        <end position="33"/>
    </location>
</feature>
<feature type="region of interest" description="Necessary for interaction with NPM1 and for efficient rRNA binding" evidence="1">
    <location>
        <begin position="23"/>
        <end position="33"/>
    </location>
</feature>
<feature type="region of interest" description="Mitochondrial targeting sequence (MTS)" evidence="1">
    <location>
        <begin position="289"/>
        <end position="318"/>
    </location>
</feature>
<feature type="short sequence motif" description="Nuclear localization signal (NLS)" evidence="1">
    <location>
        <begin position="8"/>
        <end position="13"/>
    </location>
</feature>
<feature type="short sequence motif" description="Nuclear export signal (NES)" evidence="1">
    <location>
        <begin position="64"/>
        <end position="80"/>
    </location>
</feature>
<feature type="compositionally biased region" description="Basic and acidic residues" evidence="6">
    <location>
        <begin position="16"/>
        <end position="38"/>
    </location>
</feature>
<feature type="active site" evidence="1">
    <location>
        <position position="171"/>
    </location>
</feature>
<feature type="active site" description="Proton donor/acceptor" evidence="1">
    <location>
        <position position="210"/>
    </location>
</feature>
<feature type="binding site" evidence="1">
    <location>
        <position position="70"/>
    </location>
    <ligand>
        <name>Mg(2+)</name>
        <dbReference type="ChEBI" id="CHEBI:18420"/>
        <label>1</label>
    </ligand>
</feature>
<feature type="binding site" evidence="1">
    <location>
        <position position="96"/>
    </location>
    <ligand>
        <name>Mg(2+)</name>
        <dbReference type="ChEBI" id="CHEBI:18420"/>
        <label>1</label>
    </ligand>
</feature>
<feature type="binding site" evidence="1">
    <location>
        <position position="210"/>
    </location>
    <ligand>
        <name>Mg(2+)</name>
        <dbReference type="ChEBI" id="CHEBI:18420"/>
        <label>2</label>
    </ligand>
</feature>
<feature type="binding site" evidence="1">
    <location>
        <position position="212"/>
    </location>
    <ligand>
        <name>Mg(2+)</name>
        <dbReference type="ChEBI" id="CHEBI:18420"/>
        <label>2</label>
    </ligand>
</feature>
<feature type="binding site" evidence="1">
    <location>
        <position position="308"/>
    </location>
    <ligand>
        <name>Mg(2+)</name>
        <dbReference type="ChEBI" id="CHEBI:18420"/>
        <label>1</label>
    </ligand>
</feature>
<feature type="site" description="Cleavage; by granzyme A" evidence="1">
    <location>
        <begin position="31"/>
        <end position="32"/>
    </location>
</feature>
<feature type="site" description="Transition state stabilizer" evidence="1">
    <location>
        <position position="212"/>
    </location>
</feature>
<feature type="site" description="Important for catalytic activity" evidence="1">
    <location>
        <position position="283"/>
    </location>
</feature>
<feature type="site" description="Interaction with DNA substrate" evidence="1">
    <location>
        <position position="309"/>
    </location>
</feature>
<feature type="modified residue" description="N6-acetyllysine; by EP300" evidence="3">
    <location>
        <position position="6"/>
    </location>
</feature>
<feature type="modified residue" description="N6-acetyllysine; by EP300" evidence="3">
    <location>
        <position position="7"/>
    </location>
</feature>
<feature type="modified residue" description="N6-acetyllysine" evidence="3">
    <location>
        <position position="27"/>
    </location>
</feature>
<feature type="modified residue" description="N6-acetyllysine" evidence="3">
    <location>
        <position position="31"/>
    </location>
</feature>
<feature type="modified residue" description="N6-acetyllysine" evidence="3">
    <location>
        <position position="32"/>
    </location>
</feature>
<feature type="modified residue" description="N6-acetyllysine" evidence="3">
    <location>
        <position position="35"/>
    </location>
</feature>
<feature type="modified residue" description="Phosphoserine" evidence="3">
    <location>
        <position position="54"/>
    </location>
</feature>
<feature type="modified residue" description="S-nitrosocysteine; alternate" evidence="3">
    <location>
        <position position="65"/>
    </location>
</feature>
<feature type="modified residue" description="S-nitrosocysteine; alternate" evidence="3">
    <location>
        <position position="93"/>
    </location>
</feature>
<feature type="modified residue" description="N6-acetyllysine" evidence="3">
    <location>
        <position position="197"/>
    </location>
</feature>
<feature type="modified residue" description="Phosphothreonine; by CDK5" evidence="4">
    <location>
        <position position="233"/>
    </location>
</feature>
<feature type="modified residue" description="S-nitrosocysteine" evidence="3">
    <location>
        <position position="310"/>
    </location>
</feature>
<feature type="disulfide bond" description="Alternate" evidence="1">
    <location>
        <begin position="65"/>
        <end position="93"/>
    </location>
</feature>
<proteinExistence type="inferred from homology"/>
<accession>A1YFZ3</accession>
<comment type="function">
    <text evidence="3 4">Multifunctional protein that plays a central role in the cellular response to oxidative stress. The two major activities of APEX1 are DNA repair and redox regulation of transcriptional factors (By similarity). Functions as an apurinic/apyrimidinic (AP) endodeoxyribonuclease in the base excision repair (BER) pathway of DNA lesions induced by oxidative and alkylating agents. Initiates repair of AP sites in DNA by catalyzing hydrolytic incision of the phosphodiester backbone immediately adjacent to the damage, generating a single-strand break with 5'-deoxyribose phosphate and 3'-hydroxyl ends. Also incises at AP sites in the DNA strand of DNA/RNA hybrids, single-stranded DNA regions of R-loop structures, and single-stranded RNA molecules (By similarity). Operates at switch sites of immunoglobulin (Ig) constant regions where it mediates Ig isotype class switch recombination. Processes AP sites induced by successive action of AICDA and UNG. Generates staggered nicks in opposite DNA strands resulting in the formation of double-strand DNA breaks that are finally resolved via non-homologous end joining repair pathway (By similarity). Has 3'-5' exodeoxyribonuclease activity on mismatched deoxyribonucleotides at the 3' termini of nicked or gapped DNA molecules during short-patch BER (By similarity). Possesses DNA 3' phosphodiesterase activity capable of removing lesions (such as phosphoglycolate and 8-oxoguanine) blocking the 3' side of DNA strand breaks (By similarity). Also acts as an endoribonuclease involved in the control of single-stranded RNA metabolism. Plays a role in regulating MYC mRNA turnover by preferentially cleaving in between UA and CA dinucleotides of the MYC coding region determinant (CRD). In association with NMD1, plays a role in the rRNA quality control process during cell cycle progression (By similarity). Acts as a loading factor for POLB onto non-incised AP sites in DNA and stimulates the 5'-terminal deoxyribose 5'-phosphate (dRp) excision activity of POLB (By similarity). Exerts reversible nuclear redox activity to regulate DNA binding affinity and transcriptional activity of transcriptional factors by controlling the redox status of their DNA-binding domain, such as the FOS/JUN AP-1 complex after exposure to IR. Involved in calcium-dependent down-regulation of parathyroid hormone (PTH) expression by binding to negative calcium response elements (nCaREs). Together with HNRNPL or the dimer XRCC5/XRCC6, associates with nCaRE, acting as an activator of transcriptional repression (By similarity). May also play a role in the epigenetic regulation of gene expression by participating in DNA demethylation (By similarity). Stimulates the YBX1-mediated MDR1 promoter activity, when acetylated at Lys-6 and Lys-7, leading to drug resistance (By similarity). Plays a role in protection from granzyme-mediated cellular repair leading to cell death (By similarity). Binds DNA and RNA. Associates, together with YBX1, on the MDR1 promoter. Together with NPM1, associates with rRNA (By similarity).</text>
</comment>
<comment type="catalytic activity">
    <reaction evidence="3">
        <text>a deoxyribonucleotide-2'-deoxyribose-5'-monophosphate-DNA + H2O = a 5'-end 2'-deoxyribose-5'-monophosphate-DNA + a 3'-end 2'-deoxyribonucleotide-DNA + H(+)</text>
        <dbReference type="Rhea" id="RHEA:81527"/>
        <dbReference type="Rhea" id="RHEA-COMP:13863"/>
        <dbReference type="Rhea" id="RHEA-COMP:19699"/>
        <dbReference type="Rhea" id="RHEA-COMP:19703"/>
        <dbReference type="ChEBI" id="CHEBI:15377"/>
        <dbReference type="ChEBI" id="CHEBI:15378"/>
        <dbReference type="ChEBI" id="CHEBI:138148"/>
        <dbReference type="ChEBI" id="CHEBI:231912"/>
        <dbReference type="ChEBI" id="CHEBI:231913"/>
    </reaction>
    <physiologicalReaction direction="left-to-right" evidence="3">
        <dbReference type="Rhea" id="RHEA:81528"/>
    </physiologicalReaction>
</comment>
<comment type="catalytic activity">
    <reaction evidence="3">
        <text>Exonucleolytic cleavage in the 3'- to 5'-direction to yield nucleoside 5'-phosphates.</text>
        <dbReference type="EC" id="3.1.11.2"/>
    </reaction>
</comment>
<comment type="catalytic activity">
    <reaction evidence="3">
        <text>a 3'-end 2'-deoxyribonucleotide-3'-phosphoglycolate-DNA + H2O = 2-phosphoglycolate + a 3'-end 2'-deoxyribonucleotide-DNA + H(+)</text>
        <dbReference type="Rhea" id="RHEA:81467"/>
        <dbReference type="Rhea" id="RHEA-COMP:13863"/>
        <dbReference type="Rhea" id="RHEA-COMP:19686"/>
        <dbReference type="ChEBI" id="CHEBI:15377"/>
        <dbReference type="ChEBI" id="CHEBI:15378"/>
        <dbReference type="ChEBI" id="CHEBI:58033"/>
        <dbReference type="ChEBI" id="CHEBI:138148"/>
        <dbReference type="ChEBI" id="CHEBI:231894"/>
    </reaction>
    <physiologicalReaction direction="left-to-right" evidence="3">
        <dbReference type="Rhea" id="RHEA:81468"/>
    </physiologicalReaction>
</comment>
<comment type="catalytic activity">
    <reaction evidence="3">
        <text>a 3'-end 2'-deoxyribonucleotide-8-oxoguanine-DNA + H2O = 8-oxo-dGMP + a 3'-end 2'-deoxyribonucleotide-DNA + H(+)</text>
        <dbReference type="Rhea" id="RHEA:81471"/>
        <dbReference type="Rhea" id="RHEA-COMP:13863"/>
        <dbReference type="Rhea" id="RHEA-COMP:19687"/>
        <dbReference type="ChEBI" id="CHEBI:15377"/>
        <dbReference type="ChEBI" id="CHEBI:15378"/>
        <dbReference type="ChEBI" id="CHEBI:63224"/>
        <dbReference type="ChEBI" id="CHEBI:138148"/>
        <dbReference type="ChEBI" id="CHEBI:231896"/>
    </reaction>
    <physiologicalReaction direction="left-to-right" evidence="3">
        <dbReference type="Rhea" id="RHEA:81472"/>
    </physiologicalReaction>
</comment>
<comment type="cofactor">
    <cofactor evidence="3">
        <name>Mg(2+)</name>
        <dbReference type="ChEBI" id="CHEBI:18420"/>
    </cofactor>
    <cofactor evidence="3">
        <name>Mn(2+)</name>
        <dbReference type="ChEBI" id="CHEBI:29035"/>
    </cofactor>
    <text evidence="3">Probably binds two magnesium or manganese ions per subunit.</text>
</comment>
<comment type="activity regulation">
    <text evidence="3">NPM1 stimulates endodeoxyribonuclease activity on double-stranded DNA with AP sites, but inhibits endoribonuclease activity on single-stranded RNA containing AP sites.</text>
</comment>
<comment type="subunit">
    <text evidence="3">Monomer. Homodimer; disulfide-linked. Component of the SET complex, composed of at least APEX1, SET, ANP32A, HMGB2, NME1 and TREX1. Associates with the dimer XRCC5/XRCC6 in a DNA-dependent manner. Interacts with SIRT1; the interaction is increased in the context of genotoxic stress. Interacts with HDAC1, HDAC2 and HDAC3; the interactions are not dependent on the APEX1 acetylation status. Interacts with XRCC1; the interaction is induced by SIRT1 and increased with the APEX1 acetylated form. Interacts with NPM1 (via N-terminal domain); the interaction is RNA-dependent and decreases in hydrogen peroxide-damaged cells. Interacts (via N-terminus) with YBX1 (via C-terminus); the interaction is increased in presence of APEX1 acetylated at Lys-6 and Lys-7. Interacts with HNRNPL; the interaction is DNA-dependent. Interacts (via N-terminus) with KPNA1 and KPNA2. Interacts with TXN; the interaction stimulates the FOS/JUN AP-1 complex DNA-binding activity in a redox-dependent manner. Interacts with GZMA, KRT8, MDM2, POLB, PRDX6, PRPF19, RPLP0, TOMM20 and WDR77. Binds to CDK5 (By similarity).</text>
</comment>
<comment type="subcellular location">
    <subcellularLocation>
        <location>Nucleus</location>
    </subcellularLocation>
    <subcellularLocation>
        <location evidence="1">Nucleus</location>
        <location evidence="1">Nucleolus</location>
    </subcellularLocation>
    <subcellularLocation>
        <location evidence="5">Nucleus speckle</location>
    </subcellularLocation>
    <subcellularLocation>
        <location evidence="1">Endoplasmic reticulum</location>
    </subcellularLocation>
    <subcellularLocation>
        <location evidence="5">Cytoplasm</location>
    </subcellularLocation>
    <text evidence="1">Detected in the cytoplasm of B-cells stimulated to switch. Colocalized with SIRT1 in the nucleus. Colocalized with YBX1 in nuclear speckles after genotoxic stress. Together with OGG1 is recruited to nuclear speckles in UVA-irradiated cells. Colocalized with nucleolin and NPM1 in the nucleolus. Its nucleolar localization is cell cycle dependent and requires active rRNA transcription (By similarity). Colocalized with calreticulin in the endoplasmic reticulum. Translocation from the nucleus to the cytoplasm is stimulated in presence of nitric oxide (NO) and function in a CRM1-dependent manner, possibly as a consequence of demasking a nuclear export signal (amino acid position 64-80). S-nitrosylation at Cys-93 and Cys-310 regulates its nuclear-cytosolic shuttling. Ubiquitinated form is localized predominantly in the cytoplasm (By similarity).</text>
</comment>
<comment type="subcellular location">
    <molecule>DNA repair nuclease/redox regulator APEX1, mitochondrial</molecule>
    <subcellularLocation>
        <location>Mitochondrion</location>
    </subcellularLocation>
    <text evidence="1">Translocation from the cytoplasm to the mitochondria is mediated by ROS signaling and cleavage mediated by granzyme A. Tom20-dependent translocated mitochondrial APEX1 level is significantly increased after genotoxic stress. The cleaved APEX2 is only detected in mitochondria (By similarity).</text>
</comment>
<comment type="domain">
    <text evidence="1">The N-terminus contains the redox activity while the C-terminus exerts the DNA AP-endodeoxyribonuclease activity; both function are independent in their actions. An unconventional mitochondrial targeting sequence (MTS) is harbored within the C-terminus, that appears to be masked by the N-terminal sequence containing the nuclear localization signal (NLS), that probably blocks the interaction between the MTS and Tom proteins (By similarity).</text>
</comment>
<comment type="PTM">
    <text evidence="3">Phosphorylated. Phosphorylation by kinase PKC or casein kinase CK2 results in enhanced redox activity that stimulates binding of the FOS/JUN AP-1 complex to its cognate binding site. AP-endodeoxyribonuclease activity is not affected by CK2-mediated phosphorylation. Phosphorylation of Thr-233 by CDK5 in response to MPP(+)/MPTP (1-methyl-4-phenylpyridinium) reduces AP-endodeoxyribonuclease activity resulting in accumulation of DNA damage and contributing to neuronal death (By similarity).</text>
</comment>
<comment type="PTM">
    <text evidence="3">Acetylated on Lys-6 and Lys-7. Acetylation is increased by the transcriptional coactivator EP300 acetyltransferase, genotoxic agents like H(2)O(2) and methyl methanesulfonate (MMS). Acetylation increases its binding affinity to the negative calcium response element (nCaRE) DNA promoter. The acetylated form induces a stronger binding of YBX1 to the Y-box sequence in the MDR1 promoter than the unacetylated form. Deacetylated on lysines. Lys-6 and Lys-7 are deacetylated by SIRT1 (By similarity).</text>
</comment>
<comment type="PTM">
    <text evidence="3">Cleaved at Lys-31 by granzyme A to create the mitochondrial form; leading in reduction of binding to DNA, AP endodeoxyribonuclease activity, redox activation of transcription factors and to enhanced cell death. Cleaved by granzyme K; leading to intracellular ROS accumulation and enhanced cell death after oxidative stress (By similarity).</text>
</comment>
<comment type="PTM">
    <text evidence="3">Cys-69 and Cys-93 are nitrosylated in response to nitric oxide (NO) and lead to the exposure of the nuclear export signal (NES).</text>
</comment>
<comment type="PTM">
    <text evidence="3">Ubiquitinated by MDM2; leading to translocation to the cytoplasm and proteasomal degradation.</text>
</comment>
<comment type="miscellaneous">
    <text evidence="2">The specific activity of the cleaved mitochondrial endodeoxyribonuclease appears to be about 3-fold higher than of the full-length form. Extract of mitochondria, but not of nuclei or cytosol, cleaves recombinant APEX1 to generate a mitochondrial APEX1-sized product (By similarity).</text>
</comment>
<comment type="similarity">
    <text evidence="7">Belongs to the DNA repair enzymes AP/ExoA family.</text>
</comment>
<evidence type="ECO:0000250" key="1"/>
<evidence type="ECO:0000250" key="2">
    <source>
        <dbReference type="UniProtKB" id="P23196"/>
    </source>
</evidence>
<evidence type="ECO:0000250" key="3">
    <source>
        <dbReference type="UniProtKB" id="P27695"/>
    </source>
</evidence>
<evidence type="ECO:0000250" key="4">
    <source>
        <dbReference type="UniProtKB" id="P28352"/>
    </source>
</evidence>
<evidence type="ECO:0000255" key="5">
    <source>
        <dbReference type="PROSITE-ProRule" id="PRU00764"/>
    </source>
</evidence>
<evidence type="ECO:0000256" key="6">
    <source>
        <dbReference type="SAM" id="MobiDB-lite"/>
    </source>
</evidence>
<evidence type="ECO:0000305" key="7"/>